<evidence type="ECO:0000255" key="1">
    <source>
        <dbReference type="HAMAP-Rule" id="MF_01568"/>
    </source>
</evidence>
<name>NTDP_BACAA</name>
<feature type="chain" id="PRO_1000185468" description="Nucleoside triphosphate/diphosphate phosphatase">
    <location>
        <begin position="1"/>
        <end position="176"/>
    </location>
</feature>
<feature type="active site" description="Proton donor" evidence="1">
    <location>
        <position position="23"/>
    </location>
</feature>
<feature type="binding site" evidence="1">
    <location>
        <position position="87"/>
    </location>
    <ligand>
        <name>Mg(2+)</name>
        <dbReference type="ChEBI" id="CHEBI:18420"/>
        <label>1</label>
    </ligand>
</feature>
<feature type="binding site" evidence="1">
    <location>
        <position position="103"/>
    </location>
    <ligand>
        <name>Mg(2+)</name>
        <dbReference type="ChEBI" id="CHEBI:18420"/>
        <label>1</label>
    </ligand>
</feature>
<feature type="binding site" evidence="1">
    <location>
        <position position="105"/>
    </location>
    <ligand>
        <name>Mg(2+)</name>
        <dbReference type="ChEBI" id="CHEBI:18420"/>
        <label>2</label>
    </ligand>
</feature>
<feature type="binding site" evidence="1">
    <location>
        <position position="107"/>
    </location>
    <ligand>
        <name>Mg(2+)</name>
        <dbReference type="ChEBI" id="CHEBI:18420"/>
        <label>1</label>
    </ligand>
</feature>
<feature type="binding site" evidence="1">
    <location>
        <position position="107"/>
    </location>
    <ligand>
        <name>Mg(2+)</name>
        <dbReference type="ChEBI" id="CHEBI:18420"/>
        <label>2</label>
    </ligand>
</feature>
<feature type="binding site" evidence="1">
    <location>
        <position position="120"/>
    </location>
    <ligand>
        <name>Mg(2+)</name>
        <dbReference type="ChEBI" id="CHEBI:18420"/>
        <label>2</label>
    </ligand>
</feature>
<feature type="binding site" evidence="1">
    <location>
        <position position="123"/>
    </location>
    <ligand>
        <name>Mg(2+)</name>
        <dbReference type="ChEBI" id="CHEBI:18420"/>
        <label>2</label>
    </ligand>
</feature>
<proteinExistence type="inferred from homology"/>
<reference key="1">
    <citation type="submission" date="2009-04" db="EMBL/GenBank/DDBJ databases">
        <title>Genome sequence of Bacillus anthracis A0248.</title>
        <authorList>
            <person name="Dodson R.J."/>
            <person name="Munk A.C."/>
            <person name="Bruce D."/>
            <person name="Detter C."/>
            <person name="Tapia R."/>
            <person name="Sutton G."/>
            <person name="Sims D."/>
            <person name="Brettin T."/>
        </authorList>
    </citation>
    <scope>NUCLEOTIDE SEQUENCE [LARGE SCALE GENOMIC DNA]</scope>
    <source>
        <strain>A0248</strain>
    </source>
</reference>
<keyword id="KW-0378">Hydrolase</keyword>
<keyword id="KW-0460">Magnesium</keyword>
<keyword id="KW-0479">Metal-binding</keyword>
<dbReference type="EC" id="3.6.1.15" evidence="1"/>
<dbReference type="EC" id="3.6.1.6" evidence="1"/>
<dbReference type="EMBL" id="CP001598">
    <property type="protein sequence ID" value="ACQ48949.1"/>
    <property type="molecule type" value="Genomic_DNA"/>
</dbReference>
<dbReference type="RefSeq" id="WP_000506633.1">
    <property type="nucleotide sequence ID" value="NC_012659.1"/>
</dbReference>
<dbReference type="SMR" id="C3PCY9"/>
<dbReference type="GeneID" id="45020575"/>
<dbReference type="KEGG" id="bai:BAA_0589"/>
<dbReference type="HOGENOM" id="CLU_109787_1_0_9"/>
<dbReference type="GO" id="GO:0000287">
    <property type="term" value="F:magnesium ion binding"/>
    <property type="evidence" value="ECO:0007669"/>
    <property type="project" value="UniProtKB-UniRule"/>
</dbReference>
<dbReference type="GO" id="GO:0017110">
    <property type="term" value="F:nucleoside diphosphate phosphatase activity"/>
    <property type="evidence" value="ECO:0007669"/>
    <property type="project" value="UniProtKB-UniRule"/>
</dbReference>
<dbReference type="GO" id="GO:0017111">
    <property type="term" value="F:ribonucleoside triphosphate phosphatase activity"/>
    <property type="evidence" value="ECO:0007669"/>
    <property type="project" value="UniProtKB-UniRule"/>
</dbReference>
<dbReference type="Gene3D" id="2.40.380.10">
    <property type="entry name" value="FomD-like"/>
    <property type="match status" value="1"/>
</dbReference>
<dbReference type="HAMAP" id="MF_01568">
    <property type="entry name" value="Ntdp"/>
    <property type="match status" value="1"/>
</dbReference>
<dbReference type="InterPro" id="IPR007295">
    <property type="entry name" value="DUF402"/>
</dbReference>
<dbReference type="InterPro" id="IPR035930">
    <property type="entry name" value="FomD-like_sf"/>
</dbReference>
<dbReference type="InterPro" id="IPR050212">
    <property type="entry name" value="Ntdp-like"/>
</dbReference>
<dbReference type="InterPro" id="IPR016882">
    <property type="entry name" value="SA1684"/>
</dbReference>
<dbReference type="NCBIfam" id="NF010183">
    <property type="entry name" value="PRK13662.1"/>
    <property type="match status" value="1"/>
</dbReference>
<dbReference type="PANTHER" id="PTHR39159">
    <property type="match status" value="1"/>
</dbReference>
<dbReference type="PANTHER" id="PTHR39159:SF1">
    <property type="entry name" value="UPF0374 PROTEIN YGAC"/>
    <property type="match status" value="1"/>
</dbReference>
<dbReference type="Pfam" id="PF04167">
    <property type="entry name" value="DUF402"/>
    <property type="match status" value="1"/>
</dbReference>
<dbReference type="PIRSF" id="PIRSF028345">
    <property type="entry name" value="UCP028345"/>
    <property type="match status" value="1"/>
</dbReference>
<dbReference type="SUPFAM" id="SSF159234">
    <property type="entry name" value="FomD-like"/>
    <property type="match status" value="1"/>
</dbReference>
<accession>C3PCY9</accession>
<gene>
    <name type="ordered locus">BAA_0589</name>
</gene>
<sequence length="176" mass="21066">MGFPKEGEKVQIHSYKHNGSIHRMWKETTILKGTQSLVIGANDRTVVTESDGRTWITREPAICYFHENYWFNVIGMLREEGVYYYCNLSSPFAYDSEALKYIDYDLDIKVYPDMTYTLLDEDEYEKHSQIMQYPPVIDTILKRNVAQLTQWIHQRKGPFAPDFVDMWYERYLMYRN</sequence>
<organism>
    <name type="scientific">Bacillus anthracis (strain A0248)</name>
    <dbReference type="NCBI Taxonomy" id="592021"/>
    <lineage>
        <taxon>Bacteria</taxon>
        <taxon>Bacillati</taxon>
        <taxon>Bacillota</taxon>
        <taxon>Bacilli</taxon>
        <taxon>Bacillales</taxon>
        <taxon>Bacillaceae</taxon>
        <taxon>Bacillus</taxon>
        <taxon>Bacillus cereus group</taxon>
    </lineage>
</organism>
<protein>
    <recommendedName>
        <fullName evidence="1">Nucleoside triphosphate/diphosphate phosphatase</fullName>
        <ecNumber evidence="1">3.6.1.15</ecNumber>
        <ecNumber evidence="1">3.6.1.6</ecNumber>
    </recommendedName>
</protein>
<comment type="function">
    <text evidence="1">Has nucleoside phosphatase activity towards nucleoside triphosphates and nucleoside diphosphates.</text>
</comment>
<comment type="catalytic activity">
    <reaction evidence="1">
        <text>a ribonucleoside 5'-triphosphate + H2O = a ribonucleoside 5'-diphosphate + phosphate + H(+)</text>
        <dbReference type="Rhea" id="RHEA:23680"/>
        <dbReference type="ChEBI" id="CHEBI:15377"/>
        <dbReference type="ChEBI" id="CHEBI:15378"/>
        <dbReference type="ChEBI" id="CHEBI:43474"/>
        <dbReference type="ChEBI" id="CHEBI:57930"/>
        <dbReference type="ChEBI" id="CHEBI:61557"/>
        <dbReference type="EC" id="3.6.1.15"/>
    </reaction>
</comment>
<comment type="catalytic activity">
    <reaction evidence="1">
        <text>a ribonucleoside 5'-diphosphate + H2O = a ribonucleoside 5'-phosphate + phosphate + H(+)</text>
        <dbReference type="Rhea" id="RHEA:36799"/>
        <dbReference type="ChEBI" id="CHEBI:15377"/>
        <dbReference type="ChEBI" id="CHEBI:15378"/>
        <dbReference type="ChEBI" id="CHEBI:43474"/>
        <dbReference type="ChEBI" id="CHEBI:57930"/>
        <dbReference type="ChEBI" id="CHEBI:58043"/>
        <dbReference type="EC" id="3.6.1.6"/>
    </reaction>
</comment>
<comment type="cofactor">
    <cofactor evidence="1">
        <name>Mg(2+)</name>
        <dbReference type="ChEBI" id="CHEBI:18420"/>
    </cofactor>
</comment>
<comment type="similarity">
    <text evidence="1">Belongs to the Ntdp family.</text>
</comment>